<feature type="chain" id="PRO_0000055689" description="Protein kinase C gamma type">
    <location>
        <begin position="1"/>
        <end position="697"/>
    </location>
</feature>
<feature type="domain" description="C2" evidence="5">
    <location>
        <begin position="157"/>
        <end position="275"/>
    </location>
</feature>
<feature type="domain" description="Protein kinase" evidence="6">
    <location>
        <begin position="351"/>
        <end position="614"/>
    </location>
</feature>
<feature type="domain" description="AGC-kinase C-terminal" evidence="8">
    <location>
        <begin position="615"/>
        <end position="685"/>
    </location>
</feature>
<feature type="zinc finger region" description="Phorbol-ester/DAG-type 1" evidence="7">
    <location>
        <begin position="35"/>
        <end position="85"/>
    </location>
</feature>
<feature type="zinc finger region" description="Phorbol-ester/DAG-type 2" evidence="7">
    <location>
        <begin position="100"/>
        <end position="150"/>
    </location>
</feature>
<feature type="active site" description="Proton acceptor" evidence="6 9">
    <location>
        <position position="480"/>
    </location>
</feature>
<feature type="binding site" evidence="17">
    <location>
        <position position="186"/>
    </location>
    <ligand>
        <name>Ca(2+)</name>
        <dbReference type="ChEBI" id="CHEBI:29108"/>
        <label>1</label>
    </ligand>
</feature>
<feature type="binding site" evidence="17">
    <location>
        <position position="187"/>
    </location>
    <ligand>
        <name>Ca(2+)</name>
        <dbReference type="ChEBI" id="CHEBI:29108"/>
        <label>1</label>
    </ligand>
</feature>
<feature type="binding site" evidence="17">
    <location>
        <position position="187"/>
    </location>
    <ligand>
        <name>Ca(2+)</name>
        <dbReference type="ChEBI" id="CHEBI:29108"/>
        <label>2</label>
    </ligand>
</feature>
<feature type="binding site" evidence="17">
    <location>
        <position position="193"/>
    </location>
    <ligand>
        <name>Ca(2+)</name>
        <dbReference type="ChEBI" id="CHEBI:29108"/>
        <label>2</label>
    </ligand>
</feature>
<feature type="binding site" evidence="17">
    <location>
        <position position="246"/>
    </location>
    <ligand>
        <name>Ca(2+)</name>
        <dbReference type="ChEBI" id="CHEBI:29108"/>
        <label>1</label>
    </ligand>
</feature>
<feature type="binding site" evidence="17">
    <location>
        <position position="246"/>
    </location>
    <ligand>
        <name>Ca(2+)</name>
        <dbReference type="ChEBI" id="CHEBI:29108"/>
        <label>2</label>
    </ligand>
</feature>
<feature type="binding site" evidence="17">
    <location>
        <position position="247"/>
    </location>
    <ligand>
        <name>Ca(2+)</name>
        <dbReference type="ChEBI" id="CHEBI:29108"/>
        <label>2</label>
    </ligand>
</feature>
<feature type="binding site" evidence="17">
    <location>
        <position position="248"/>
    </location>
    <ligand>
        <name>Ca(2+)</name>
        <dbReference type="ChEBI" id="CHEBI:29108"/>
        <label>1</label>
    </ligand>
</feature>
<feature type="binding site" evidence="17">
    <location>
        <position position="248"/>
    </location>
    <ligand>
        <name>Ca(2+)</name>
        <dbReference type="ChEBI" id="CHEBI:29108"/>
        <label>2</label>
    </ligand>
</feature>
<feature type="binding site" evidence="17">
    <location>
        <position position="248"/>
    </location>
    <ligand>
        <name>Ca(2+)</name>
        <dbReference type="ChEBI" id="CHEBI:29108"/>
        <label>3</label>
    </ligand>
</feature>
<feature type="binding site" evidence="17">
    <location>
        <position position="251"/>
    </location>
    <ligand>
        <name>Ca(2+)</name>
        <dbReference type="ChEBI" id="CHEBI:29108"/>
        <label>3</label>
    </ligand>
</feature>
<feature type="binding site" evidence="17">
    <location>
        <position position="252"/>
    </location>
    <ligand>
        <name>Ca(2+)</name>
        <dbReference type="ChEBI" id="CHEBI:29108"/>
        <label>3</label>
    </ligand>
</feature>
<feature type="binding site" evidence="17">
    <location>
        <position position="254"/>
    </location>
    <ligand>
        <name>Ca(2+)</name>
        <dbReference type="ChEBI" id="CHEBI:29108"/>
        <label>1</label>
    </ligand>
</feature>
<feature type="binding site" evidence="17">
    <location>
        <position position="254"/>
    </location>
    <ligand>
        <name>Ca(2+)</name>
        <dbReference type="ChEBI" id="CHEBI:29108"/>
        <label>3</label>
    </ligand>
</feature>
<feature type="binding site" evidence="6">
    <location>
        <begin position="357"/>
        <end position="365"/>
    </location>
    <ligand>
        <name>ATP</name>
        <dbReference type="ChEBI" id="CHEBI:30616"/>
    </ligand>
</feature>
<feature type="binding site" evidence="6">
    <location>
        <position position="380"/>
    </location>
    <ligand>
        <name>ATP</name>
        <dbReference type="ChEBI" id="CHEBI:30616"/>
    </ligand>
</feature>
<feature type="modified residue" description="Phosphothreonine; by autocatalysis" evidence="1">
    <location>
        <position position="250"/>
    </location>
</feature>
<feature type="modified residue" description="Phosphoserine" evidence="2">
    <location>
        <position position="320"/>
    </location>
</feature>
<feature type="modified residue" description="Phosphoserine" evidence="2">
    <location>
        <position position="322"/>
    </location>
</feature>
<feature type="modified residue" description="Phosphoserine" evidence="2">
    <location>
        <position position="326"/>
    </location>
</feature>
<feature type="modified residue" description="Phosphoserine" evidence="2">
    <location>
        <position position="328"/>
    </location>
</feature>
<feature type="modified residue" description="Phosphoserine" evidence="2">
    <location>
        <position position="330"/>
    </location>
</feature>
<feature type="modified residue" description="Phosphothreonine" evidence="2">
    <location>
        <position position="332"/>
    </location>
</feature>
<feature type="modified residue" description="Phosphoserine" evidence="2">
    <location>
        <position position="373"/>
    </location>
</feature>
<feature type="modified residue" description="Phosphothreonine; by PDPK1" evidence="2">
    <location>
        <position position="514"/>
    </location>
</feature>
<feature type="modified residue" description="Phosphothreonine; by autocatalysis" evidence="4">
    <location>
        <position position="648"/>
    </location>
</feature>
<feature type="modified residue" description="Phosphothreonine; by autocatalysis" evidence="2">
    <location>
        <position position="655"/>
    </location>
</feature>
<feature type="modified residue" description="Phosphothreonine; by autocatalysis" evidence="2">
    <location>
        <position position="674"/>
    </location>
</feature>
<feature type="modified residue" description="Phosphotyrosine; by SYK" evidence="1">
    <location>
        <position position="675"/>
    </location>
</feature>
<feature type="modified residue" description="Phosphoserine" evidence="3">
    <location>
        <position position="687"/>
    </location>
</feature>
<feature type="splice variant" id="VSP_056467" description="In isoform 2." evidence="18">
    <original>MAGLGPGVGDSEGGPRPLFC</original>
    <variation>MPRICDLRVSRRWEGPPDGR</variation>
    <location>
        <begin position="1"/>
        <end position="20"/>
    </location>
</feature>
<feature type="splice variant" id="VSP_056468" description="In isoform 2." evidence="18">
    <location>
        <begin position="21"/>
        <end position="133"/>
    </location>
</feature>
<feature type="splice variant" id="VSP_056469" description="In isoform 2." evidence="18">
    <location>
        <begin position="553"/>
        <end position="588"/>
    </location>
</feature>
<feature type="sequence variant" id="VAR_080740" description="In SCA14." evidence="14">
    <original>G</original>
    <variation>R</variation>
    <location>
        <position position="63"/>
    </location>
</feature>
<feature type="sequence variant" id="VAR_080741" description="In SCA14; dbSNP:rs386134159." evidence="14">
    <original>G</original>
    <variation>V</variation>
    <location>
        <position position="63"/>
    </location>
</feature>
<feature type="sequence variant" id="VAR_017060" description="In SCA14; dbSNP:rs121918511." evidence="10">
    <original>H</original>
    <variation>Y</variation>
    <location>
        <position position="101"/>
    </location>
</feature>
<feature type="sequence variant" id="VAR_017061" description="In SCA14; dbSNP:rs121918512." evidence="10">
    <original>S</original>
    <variation>P</variation>
    <location>
        <position position="119"/>
    </location>
</feature>
<feature type="sequence variant" id="VAR_017062" description="In SCA14; dbSNP:rs121918513." evidence="10">
    <original>G</original>
    <variation>D</variation>
    <location>
        <position position="128"/>
    </location>
</feature>
<feature type="sequence variant" id="VAR_008755" evidence="16">
    <original>R</original>
    <variation>C</variation>
    <location>
        <position position="141"/>
    </location>
</feature>
<feature type="sequence variant" id="VAR_008756" evidence="16">
    <original>H</original>
    <variation>Q</variation>
    <location>
        <position position="415"/>
    </location>
</feature>
<feature type="sequence variant" id="VAR_008757" evidence="16">
    <original>A</original>
    <variation>D</variation>
    <location>
        <position position="523"/>
    </location>
</feature>
<feature type="sequence variant" id="VAR_008758" description="In dbSNP:rs752933837." evidence="16">
    <original>R</original>
    <variation>S</variation>
    <location>
        <position position="659"/>
    </location>
</feature>
<feature type="sequence conflict" description="In Ref. 5; AAA60102." evidence="19" ref="5">
    <original>RVRM</original>
    <variation>VSRT</variation>
    <location>
        <begin position="314"/>
        <end position="317"/>
    </location>
</feature>
<feature type="turn" evidence="20">
    <location>
        <begin position="50"/>
        <end position="52"/>
    </location>
</feature>
<feature type="strand" evidence="20">
    <location>
        <begin position="57"/>
        <end position="59"/>
    </location>
</feature>
<feature type="turn" evidence="20">
    <location>
        <begin position="67"/>
        <end position="69"/>
    </location>
</feature>
<feature type="helix" evidence="20">
    <location>
        <begin position="75"/>
        <end position="80"/>
    </location>
</feature>
<feature type="turn" evidence="20">
    <location>
        <begin position="86"/>
        <end position="89"/>
    </location>
</feature>
<feature type="strand" evidence="21">
    <location>
        <begin position="160"/>
        <end position="169"/>
    </location>
</feature>
<feature type="strand" evidence="21">
    <location>
        <begin position="172"/>
        <end position="182"/>
    </location>
</feature>
<feature type="strand" evidence="21">
    <location>
        <begin position="194"/>
        <end position="201"/>
    </location>
</feature>
<feature type="strand" evidence="21">
    <location>
        <begin position="222"/>
        <end position="230"/>
    </location>
</feature>
<feature type="helix" evidence="21">
    <location>
        <begin position="233"/>
        <end position="237"/>
    </location>
</feature>
<feature type="strand" evidence="21">
    <location>
        <begin position="239"/>
        <end position="246"/>
    </location>
</feature>
<feature type="strand" evidence="21">
    <location>
        <begin position="249"/>
        <end position="251"/>
    </location>
</feature>
<feature type="strand" evidence="21">
    <location>
        <begin position="254"/>
        <end position="262"/>
    </location>
</feature>
<feature type="helix" evidence="21">
    <location>
        <begin position="263"/>
        <end position="268"/>
    </location>
</feature>
<feature type="strand" evidence="21">
    <location>
        <begin position="271"/>
        <end position="276"/>
    </location>
</feature>
<feature type="helix" evidence="21">
    <location>
        <begin position="280"/>
        <end position="283"/>
    </location>
</feature>
<evidence type="ECO:0000250" key="1"/>
<evidence type="ECO:0000250" key="2">
    <source>
        <dbReference type="UniProtKB" id="P63318"/>
    </source>
</evidence>
<evidence type="ECO:0000250" key="3">
    <source>
        <dbReference type="UniProtKB" id="P63319"/>
    </source>
</evidence>
<evidence type="ECO:0000255" key="4"/>
<evidence type="ECO:0000255" key="5">
    <source>
        <dbReference type="PROSITE-ProRule" id="PRU00041"/>
    </source>
</evidence>
<evidence type="ECO:0000255" key="6">
    <source>
        <dbReference type="PROSITE-ProRule" id="PRU00159"/>
    </source>
</evidence>
<evidence type="ECO:0000255" key="7">
    <source>
        <dbReference type="PROSITE-ProRule" id="PRU00226"/>
    </source>
</evidence>
<evidence type="ECO:0000255" key="8">
    <source>
        <dbReference type="PROSITE-ProRule" id="PRU00618"/>
    </source>
</evidence>
<evidence type="ECO:0000255" key="9">
    <source>
        <dbReference type="PROSITE-ProRule" id="PRU10027"/>
    </source>
</evidence>
<evidence type="ECO:0000269" key="10">
    <source>
    </source>
</evidence>
<evidence type="ECO:0000269" key="11">
    <source>
    </source>
</evidence>
<evidence type="ECO:0000269" key="12">
    <source>
    </source>
</evidence>
<evidence type="ECO:0000269" key="13">
    <source>
    </source>
</evidence>
<evidence type="ECO:0000269" key="14">
    <source>
    </source>
</evidence>
<evidence type="ECO:0000269" key="15">
    <source>
    </source>
</evidence>
<evidence type="ECO:0000269" key="16">
    <source>
    </source>
</evidence>
<evidence type="ECO:0000269" key="17">
    <source ref="15"/>
</evidence>
<evidence type="ECO:0000303" key="18">
    <source>
    </source>
</evidence>
<evidence type="ECO:0000305" key="19"/>
<evidence type="ECO:0007829" key="20">
    <source>
        <dbReference type="PDB" id="2E73"/>
    </source>
</evidence>
<evidence type="ECO:0007829" key="21">
    <source>
        <dbReference type="PDB" id="2UZP"/>
    </source>
</evidence>
<dbReference type="EC" id="2.7.11.13" evidence="15"/>
<dbReference type="EMBL" id="AF345987">
    <property type="protein sequence ID" value="AAK13533.1"/>
    <property type="molecule type" value="mRNA"/>
</dbReference>
<dbReference type="EMBL" id="AK303741">
    <property type="protein sequence ID" value="BAH14036.1"/>
    <property type="molecule type" value="mRNA"/>
</dbReference>
<dbReference type="EMBL" id="AC008440">
    <property type="status" value="NOT_ANNOTATED_CDS"/>
    <property type="molecule type" value="Genomic_DNA"/>
</dbReference>
<dbReference type="EMBL" id="BC047876">
    <property type="protein sequence ID" value="AAH47876.1"/>
    <property type="molecule type" value="mRNA"/>
</dbReference>
<dbReference type="EMBL" id="M13977">
    <property type="protein sequence ID" value="AAA60102.1"/>
    <property type="molecule type" value="mRNA"/>
</dbReference>
<dbReference type="EMBL" id="Z15114">
    <property type="protein sequence ID" value="CAA78820.1"/>
    <property type="molecule type" value="mRNA"/>
</dbReference>
<dbReference type="CCDS" id="CCDS12867.1">
    <molecule id="P05129-1"/>
</dbReference>
<dbReference type="PIR" id="D24664">
    <property type="entry name" value="D24664"/>
</dbReference>
<dbReference type="RefSeq" id="NP_001303258.1">
    <property type="nucleotide sequence ID" value="NM_001316329.1"/>
</dbReference>
<dbReference type="RefSeq" id="NP_002730.1">
    <molecule id="P05129-1"/>
    <property type="nucleotide sequence ID" value="NM_002739.5"/>
</dbReference>
<dbReference type="PDB" id="2E73">
    <property type="method" value="NMR"/>
    <property type="chains" value="A=36-105"/>
</dbReference>
<dbReference type="PDB" id="2UZP">
    <property type="method" value="X-ray"/>
    <property type="resolution" value="2.00 A"/>
    <property type="chains" value="A/B/C=154-295"/>
</dbReference>
<dbReference type="PDBsum" id="2E73"/>
<dbReference type="PDBsum" id="2UZP"/>
<dbReference type="SMR" id="P05129"/>
<dbReference type="BioGRID" id="111568">
    <property type="interactions" value="72"/>
</dbReference>
<dbReference type="DIP" id="DIP-39795N"/>
<dbReference type="FunCoup" id="P05129">
    <property type="interactions" value="1943"/>
</dbReference>
<dbReference type="IntAct" id="P05129">
    <property type="interactions" value="45"/>
</dbReference>
<dbReference type="MINT" id="P05129"/>
<dbReference type="STRING" id="9606.ENSP00000263431"/>
<dbReference type="BindingDB" id="P05129"/>
<dbReference type="ChEMBL" id="CHEMBL2938"/>
<dbReference type="DrugBank" id="DB09096">
    <property type="generic name" value="Benzoyl peroxide"/>
</dbReference>
<dbReference type="DrugBank" id="DB03777">
    <property type="generic name" value="Bisindolylmaleimide I"/>
</dbReference>
<dbReference type="DrugBank" id="DB04209">
    <property type="generic name" value="Dequalinium"/>
</dbReference>
<dbReference type="DrugBank" id="DB12010">
    <property type="generic name" value="Fostamatinib"/>
</dbReference>
<dbReference type="DrugBank" id="DB06595">
    <property type="generic name" value="Midostaurin"/>
</dbReference>
<dbReference type="DrugBank" id="DB02010">
    <property type="generic name" value="Staurosporine"/>
</dbReference>
<dbReference type="DrugBank" id="DB00675">
    <property type="generic name" value="Tamoxifen"/>
</dbReference>
<dbReference type="DrugCentral" id="P05129"/>
<dbReference type="GuidetoPHARMACOLOGY" id="1484"/>
<dbReference type="GlyGen" id="P05129">
    <property type="glycosylation" value="1 site"/>
</dbReference>
<dbReference type="iPTMnet" id="P05129"/>
<dbReference type="PhosphoSitePlus" id="P05129"/>
<dbReference type="SwissPalm" id="P05129"/>
<dbReference type="BioMuta" id="PRKCG"/>
<dbReference type="DMDM" id="462455"/>
<dbReference type="CPTAC" id="CPTAC-3049"/>
<dbReference type="CPTAC" id="CPTAC-3050"/>
<dbReference type="jPOST" id="P05129"/>
<dbReference type="MassIVE" id="P05129"/>
<dbReference type="PaxDb" id="9606-ENSP00000263431"/>
<dbReference type="PeptideAtlas" id="P05129"/>
<dbReference type="ProteomicsDB" id="51803">
    <molecule id="P05129-1"/>
</dbReference>
<dbReference type="ProteomicsDB" id="6967"/>
<dbReference type="Antibodypedia" id="32756">
    <property type="antibodies" value="648 antibodies from 39 providers"/>
</dbReference>
<dbReference type="DNASU" id="5582"/>
<dbReference type="Ensembl" id="ENST00000263431.4">
    <molecule id="P05129-1"/>
    <property type="protein sequence ID" value="ENSP00000263431.3"/>
    <property type="gene ID" value="ENSG00000126583.12"/>
</dbReference>
<dbReference type="GeneID" id="5582"/>
<dbReference type="KEGG" id="hsa:5582"/>
<dbReference type="MANE-Select" id="ENST00000263431.4">
    <property type="protein sequence ID" value="ENSP00000263431.3"/>
    <property type="RefSeq nucleotide sequence ID" value="NM_002739.5"/>
    <property type="RefSeq protein sequence ID" value="NP_002730.1"/>
</dbReference>
<dbReference type="UCSC" id="uc002qcq.2">
    <molecule id="P05129-1"/>
    <property type="organism name" value="human"/>
</dbReference>
<dbReference type="AGR" id="HGNC:9402"/>
<dbReference type="CTD" id="5582"/>
<dbReference type="DisGeNET" id="5582"/>
<dbReference type="GeneCards" id="PRKCG"/>
<dbReference type="GeneReviews" id="PRKCG"/>
<dbReference type="HGNC" id="HGNC:9402">
    <property type="gene designation" value="PRKCG"/>
</dbReference>
<dbReference type="HPA" id="ENSG00000126583">
    <property type="expression patterns" value="Tissue enriched (brain)"/>
</dbReference>
<dbReference type="MalaCards" id="PRKCG"/>
<dbReference type="MIM" id="176980">
    <property type="type" value="gene"/>
</dbReference>
<dbReference type="MIM" id="605361">
    <property type="type" value="phenotype"/>
</dbReference>
<dbReference type="neXtProt" id="NX_P05129"/>
<dbReference type="OpenTargets" id="ENSG00000126583"/>
<dbReference type="Orphanet" id="98763">
    <property type="disease" value="Spinocerebellar ataxia type 14"/>
</dbReference>
<dbReference type="PharmGKB" id="PA33766"/>
<dbReference type="VEuPathDB" id="HostDB:ENSG00000126583"/>
<dbReference type="eggNOG" id="KOG0696">
    <property type="taxonomic scope" value="Eukaryota"/>
</dbReference>
<dbReference type="GeneTree" id="ENSGT00940000161219"/>
<dbReference type="HOGENOM" id="CLU_000288_54_2_1"/>
<dbReference type="InParanoid" id="P05129"/>
<dbReference type="OMA" id="DADNCGL"/>
<dbReference type="OrthoDB" id="63267at2759"/>
<dbReference type="PAN-GO" id="P05129">
    <property type="GO annotations" value="3 GO annotations based on evolutionary models"/>
</dbReference>
<dbReference type="PhylomeDB" id="P05129"/>
<dbReference type="TreeFam" id="TF351133"/>
<dbReference type="BRENDA" id="2.7.11.13">
    <property type="organism ID" value="2681"/>
</dbReference>
<dbReference type="PathwayCommons" id="P05129"/>
<dbReference type="Reactome" id="R-HSA-111933">
    <property type="pathway name" value="Calmodulin induced events"/>
</dbReference>
<dbReference type="Reactome" id="R-HSA-114516">
    <property type="pathway name" value="Disinhibition of SNARE formation"/>
</dbReference>
<dbReference type="Reactome" id="R-HSA-416993">
    <property type="pathway name" value="Trafficking of GluR2-containing AMPA receptors"/>
</dbReference>
<dbReference type="Reactome" id="R-HSA-418597">
    <property type="pathway name" value="G alpha (z) signalling events"/>
</dbReference>
<dbReference type="Reactome" id="R-HSA-5099900">
    <property type="pathway name" value="WNT5A-dependent internalization of FZD4"/>
</dbReference>
<dbReference type="Reactome" id="R-HSA-76005">
    <property type="pathway name" value="Response to elevated platelet cytosolic Ca2+"/>
</dbReference>
<dbReference type="SignaLink" id="P05129"/>
<dbReference type="SIGNOR" id="P05129"/>
<dbReference type="BioGRID-ORCS" id="5582">
    <property type="hits" value="16 hits in 1184 CRISPR screens"/>
</dbReference>
<dbReference type="CD-CODE" id="FB4E32DD">
    <property type="entry name" value="Presynaptic clusters and postsynaptic densities"/>
</dbReference>
<dbReference type="ChiTaRS" id="PRKCG">
    <property type="organism name" value="human"/>
</dbReference>
<dbReference type="EvolutionaryTrace" id="P05129"/>
<dbReference type="GeneWiki" id="PRKCG"/>
<dbReference type="GenomeRNAi" id="5582"/>
<dbReference type="Pharos" id="P05129">
    <property type="development level" value="Tchem"/>
</dbReference>
<dbReference type="PRO" id="PR:P05129"/>
<dbReference type="Proteomes" id="UP000005640">
    <property type="component" value="Chromosome 19"/>
</dbReference>
<dbReference type="RNAct" id="P05129">
    <property type="molecule type" value="protein"/>
</dbReference>
<dbReference type="Bgee" id="ENSG00000126583">
    <property type="expression patterns" value="Expressed in right frontal lobe and 115 other cell types or tissues"/>
</dbReference>
<dbReference type="ExpressionAtlas" id="P05129">
    <property type="expression patterns" value="baseline and differential"/>
</dbReference>
<dbReference type="GO" id="GO:0044305">
    <property type="term" value="C:calyx of Held"/>
    <property type="evidence" value="ECO:0007669"/>
    <property type="project" value="Ensembl"/>
</dbReference>
<dbReference type="GO" id="GO:0005911">
    <property type="term" value="C:cell-cell junction"/>
    <property type="evidence" value="ECO:0007669"/>
    <property type="project" value="Ensembl"/>
</dbReference>
<dbReference type="GO" id="GO:0005829">
    <property type="term" value="C:cytosol"/>
    <property type="evidence" value="ECO:0000250"/>
    <property type="project" value="UniProtKB"/>
</dbReference>
<dbReference type="GO" id="GO:0030425">
    <property type="term" value="C:dendrite"/>
    <property type="evidence" value="ECO:0000250"/>
    <property type="project" value="UniProtKB"/>
</dbReference>
<dbReference type="GO" id="GO:0005634">
    <property type="term" value="C:nucleus"/>
    <property type="evidence" value="ECO:0007669"/>
    <property type="project" value="Ensembl"/>
</dbReference>
<dbReference type="GO" id="GO:0048471">
    <property type="term" value="C:perinuclear region of cytoplasm"/>
    <property type="evidence" value="ECO:0000250"/>
    <property type="project" value="UniProtKB"/>
</dbReference>
<dbReference type="GO" id="GO:0005886">
    <property type="term" value="C:plasma membrane"/>
    <property type="evidence" value="ECO:0000250"/>
    <property type="project" value="UniProtKB"/>
</dbReference>
<dbReference type="GO" id="GO:0099524">
    <property type="term" value="C:postsynaptic cytosol"/>
    <property type="evidence" value="ECO:0000304"/>
    <property type="project" value="UniProt"/>
</dbReference>
<dbReference type="GO" id="GO:0014069">
    <property type="term" value="C:postsynaptic density"/>
    <property type="evidence" value="ECO:0007669"/>
    <property type="project" value="Ensembl"/>
</dbReference>
<dbReference type="GO" id="GO:0099523">
    <property type="term" value="C:presynaptic cytosol"/>
    <property type="evidence" value="ECO:0007669"/>
    <property type="project" value="Ensembl"/>
</dbReference>
<dbReference type="GO" id="GO:0097060">
    <property type="term" value="C:synaptic membrane"/>
    <property type="evidence" value="ECO:0007669"/>
    <property type="project" value="Ensembl"/>
</dbReference>
<dbReference type="GO" id="GO:0005524">
    <property type="term" value="F:ATP binding"/>
    <property type="evidence" value="ECO:0007669"/>
    <property type="project" value="UniProtKB-KW"/>
</dbReference>
<dbReference type="GO" id="GO:0004698">
    <property type="term" value="F:calcium,diacylglycerol-dependent serine/threonine kinase activity"/>
    <property type="evidence" value="ECO:0000314"/>
    <property type="project" value="UniProt"/>
</dbReference>
<dbReference type="GO" id="GO:0004697">
    <property type="term" value="F:diacylglycerol-dependent serine/threonine kinase activity"/>
    <property type="evidence" value="ECO:0000304"/>
    <property type="project" value="ProtInc"/>
</dbReference>
<dbReference type="GO" id="GO:0004672">
    <property type="term" value="F:protein kinase activity"/>
    <property type="evidence" value="ECO:0000314"/>
    <property type="project" value="HGNC-UCL"/>
</dbReference>
<dbReference type="GO" id="GO:0106310">
    <property type="term" value="F:protein serine kinase activity"/>
    <property type="evidence" value="ECO:0007669"/>
    <property type="project" value="RHEA"/>
</dbReference>
<dbReference type="GO" id="GO:0004674">
    <property type="term" value="F:protein serine/threonine kinase activity"/>
    <property type="evidence" value="ECO:0000318"/>
    <property type="project" value="GO_Central"/>
</dbReference>
<dbReference type="GO" id="GO:0004712">
    <property type="term" value="F:protein serine/threonine/tyrosine kinase activity"/>
    <property type="evidence" value="ECO:0000314"/>
    <property type="project" value="MGI"/>
</dbReference>
<dbReference type="GO" id="GO:0008270">
    <property type="term" value="F:zinc ion binding"/>
    <property type="evidence" value="ECO:0007669"/>
    <property type="project" value="UniProtKB-KW"/>
</dbReference>
<dbReference type="GO" id="GO:0007268">
    <property type="term" value="P:chemical synaptic transmission"/>
    <property type="evidence" value="ECO:0007669"/>
    <property type="project" value="Ensembl"/>
</dbReference>
<dbReference type="GO" id="GO:0007635">
    <property type="term" value="P:chemosensory behavior"/>
    <property type="evidence" value="ECO:0007669"/>
    <property type="project" value="Ensembl"/>
</dbReference>
<dbReference type="GO" id="GO:0060384">
    <property type="term" value="P:innervation"/>
    <property type="evidence" value="ECO:0007669"/>
    <property type="project" value="Ensembl"/>
</dbReference>
<dbReference type="GO" id="GO:0035556">
    <property type="term" value="P:intracellular signal transduction"/>
    <property type="evidence" value="ECO:0000318"/>
    <property type="project" value="GO_Central"/>
</dbReference>
<dbReference type="GO" id="GO:0007611">
    <property type="term" value="P:learning or memory"/>
    <property type="evidence" value="ECO:0007669"/>
    <property type="project" value="Ensembl"/>
</dbReference>
<dbReference type="GO" id="GO:0060291">
    <property type="term" value="P:long-term synaptic potentiation"/>
    <property type="evidence" value="ECO:0007669"/>
    <property type="project" value="Ensembl"/>
</dbReference>
<dbReference type="GO" id="GO:0043524">
    <property type="term" value="P:negative regulation of neuron apoptotic process"/>
    <property type="evidence" value="ECO:0000250"/>
    <property type="project" value="UniProtKB"/>
</dbReference>
<dbReference type="GO" id="GO:1901799">
    <property type="term" value="P:negative regulation of proteasomal protein catabolic process"/>
    <property type="evidence" value="ECO:0000250"/>
    <property type="project" value="UniProtKB"/>
</dbReference>
<dbReference type="GO" id="GO:0042177">
    <property type="term" value="P:negative regulation of protein catabolic process"/>
    <property type="evidence" value="ECO:0000314"/>
    <property type="project" value="HGNC-UCL"/>
</dbReference>
<dbReference type="GO" id="GO:0031397">
    <property type="term" value="P:negative regulation of protein ubiquitination"/>
    <property type="evidence" value="ECO:0000314"/>
    <property type="project" value="HGNC-UCL"/>
</dbReference>
<dbReference type="GO" id="GO:0007200">
    <property type="term" value="P:phospholipase C-activating G protein-coupled receptor signaling pathway"/>
    <property type="evidence" value="ECO:0000314"/>
    <property type="project" value="UniProt"/>
</dbReference>
<dbReference type="GO" id="GO:0032425">
    <property type="term" value="P:positive regulation of mismatch repair"/>
    <property type="evidence" value="ECO:0000314"/>
    <property type="project" value="HGNC-UCL"/>
</dbReference>
<dbReference type="GO" id="GO:0099171">
    <property type="term" value="P:presynaptic modulation of chemical synaptic transmission"/>
    <property type="evidence" value="ECO:0007669"/>
    <property type="project" value="Ensembl"/>
</dbReference>
<dbReference type="GO" id="GO:0042752">
    <property type="term" value="P:regulation of circadian rhythm"/>
    <property type="evidence" value="ECO:0000250"/>
    <property type="project" value="UniProtKB"/>
</dbReference>
<dbReference type="GO" id="GO:0050764">
    <property type="term" value="P:regulation of phagocytosis"/>
    <property type="evidence" value="ECO:0007669"/>
    <property type="project" value="Ensembl"/>
</dbReference>
<dbReference type="GO" id="GO:0032095">
    <property type="term" value="P:regulation of response to food"/>
    <property type="evidence" value="ECO:0000250"/>
    <property type="project" value="UniProtKB"/>
</dbReference>
<dbReference type="GO" id="GO:2000300">
    <property type="term" value="P:regulation of synaptic vesicle exocytosis"/>
    <property type="evidence" value="ECO:0007669"/>
    <property type="project" value="Ensembl"/>
</dbReference>
<dbReference type="GO" id="GO:1990776">
    <property type="term" value="P:response to angiotensin"/>
    <property type="evidence" value="ECO:0007669"/>
    <property type="project" value="Ensembl"/>
</dbReference>
<dbReference type="GO" id="GO:0043278">
    <property type="term" value="P:response to morphine"/>
    <property type="evidence" value="ECO:0000250"/>
    <property type="project" value="UniProtKB"/>
</dbReference>
<dbReference type="GO" id="GO:0048265">
    <property type="term" value="P:response to pain"/>
    <property type="evidence" value="ECO:0000250"/>
    <property type="project" value="UniProtKB"/>
</dbReference>
<dbReference type="GO" id="GO:1990911">
    <property type="term" value="P:response to psychosocial stress"/>
    <property type="evidence" value="ECO:0007669"/>
    <property type="project" value="Ensembl"/>
</dbReference>
<dbReference type="GO" id="GO:0009636">
    <property type="term" value="P:response to toxic substance"/>
    <property type="evidence" value="ECO:0007669"/>
    <property type="project" value="Ensembl"/>
</dbReference>
<dbReference type="GO" id="GO:0048511">
    <property type="term" value="P:rhythmic process"/>
    <property type="evidence" value="ECO:0007669"/>
    <property type="project" value="UniProtKB-KW"/>
</dbReference>
<dbReference type="CDD" id="cd20833">
    <property type="entry name" value="C1_cPKC_rpt1"/>
    <property type="match status" value="1"/>
</dbReference>
<dbReference type="CDD" id="cd20836">
    <property type="entry name" value="C1_cPKC_rpt2"/>
    <property type="match status" value="1"/>
</dbReference>
<dbReference type="CDD" id="cd04026">
    <property type="entry name" value="C2_PKC_alpha_gamma"/>
    <property type="match status" value="1"/>
</dbReference>
<dbReference type="CDD" id="cd05587">
    <property type="entry name" value="STKc_cPKC"/>
    <property type="match status" value="1"/>
</dbReference>
<dbReference type="FunFam" id="2.60.40.150:FF:000012">
    <property type="entry name" value="Kinase C alpha type"/>
    <property type="match status" value="1"/>
</dbReference>
<dbReference type="FunFam" id="1.10.510.10:FF:000023">
    <property type="entry name" value="Protein kinase C"/>
    <property type="match status" value="1"/>
</dbReference>
<dbReference type="FunFam" id="3.30.200.20:FF:000080">
    <property type="entry name" value="Protein kinase C"/>
    <property type="match status" value="1"/>
</dbReference>
<dbReference type="FunFam" id="3.30.200.20:FF:000103">
    <property type="entry name" value="Protein kinase C"/>
    <property type="match status" value="1"/>
</dbReference>
<dbReference type="FunFam" id="3.30.60.20:FF:000006">
    <property type="entry name" value="Protein kinase C"/>
    <property type="match status" value="1"/>
</dbReference>
<dbReference type="FunFam" id="3.30.60.20:FF:000011">
    <property type="entry name" value="Protein kinase C"/>
    <property type="match status" value="1"/>
</dbReference>
<dbReference type="Gene3D" id="3.30.60.20">
    <property type="match status" value="2"/>
</dbReference>
<dbReference type="Gene3D" id="2.60.40.150">
    <property type="entry name" value="C2 domain"/>
    <property type="match status" value="1"/>
</dbReference>
<dbReference type="Gene3D" id="3.30.200.20">
    <property type="entry name" value="Phosphorylase Kinase, domain 1"/>
    <property type="match status" value="2"/>
</dbReference>
<dbReference type="Gene3D" id="1.10.510.10">
    <property type="entry name" value="Transferase(Phosphotransferase) domain 1"/>
    <property type="match status" value="1"/>
</dbReference>
<dbReference type="InterPro" id="IPR000961">
    <property type="entry name" value="AGC-kinase_C"/>
</dbReference>
<dbReference type="InterPro" id="IPR046349">
    <property type="entry name" value="C1-like_sf"/>
</dbReference>
<dbReference type="InterPro" id="IPR000008">
    <property type="entry name" value="C2_dom"/>
</dbReference>
<dbReference type="InterPro" id="IPR035892">
    <property type="entry name" value="C2_domain_sf"/>
</dbReference>
<dbReference type="InterPro" id="IPR020454">
    <property type="entry name" value="DAG/PE-bd"/>
</dbReference>
<dbReference type="InterPro" id="IPR011009">
    <property type="entry name" value="Kinase-like_dom_sf"/>
</dbReference>
<dbReference type="InterPro" id="IPR002219">
    <property type="entry name" value="PE/DAG-bd"/>
</dbReference>
<dbReference type="InterPro" id="IPR017892">
    <property type="entry name" value="Pkinase_C"/>
</dbReference>
<dbReference type="InterPro" id="IPR000719">
    <property type="entry name" value="Prot_kinase_dom"/>
</dbReference>
<dbReference type="InterPro" id="IPR017441">
    <property type="entry name" value="Protein_kinase_ATP_BS"/>
</dbReference>
<dbReference type="InterPro" id="IPR014375">
    <property type="entry name" value="Protein_kinase_C_a/b/g"/>
</dbReference>
<dbReference type="InterPro" id="IPR008271">
    <property type="entry name" value="Ser/Thr_kinase_AS"/>
</dbReference>
<dbReference type="PANTHER" id="PTHR24351">
    <property type="entry name" value="RIBOSOMAL PROTEIN S6 KINASE"/>
    <property type="match status" value="1"/>
</dbReference>
<dbReference type="Pfam" id="PF00130">
    <property type="entry name" value="C1_1"/>
    <property type="match status" value="2"/>
</dbReference>
<dbReference type="Pfam" id="PF00168">
    <property type="entry name" value="C2"/>
    <property type="match status" value="1"/>
</dbReference>
<dbReference type="Pfam" id="PF00069">
    <property type="entry name" value="Pkinase"/>
    <property type="match status" value="1"/>
</dbReference>
<dbReference type="Pfam" id="PF00433">
    <property type="entry name" value="Pkinase_C"/>
    <property type="match status" value="1"/>
</dbReference>
<dbReference type="PIRSF" id="PIRSF000550">
    <property type="entry name" value="PKC_alpha"/>
    <property type="match status" value="1"/>
</dbReference>
<dbReference type="PRINTS" id="PR00360">
    <property type="entry name" value="C2DOMAIN"/>
</dbReference>
<dbReference type="PRINTS" id="PR00008">
    <property type="entry name" value="DAGPEDOMAIN"/>
</dbReference>
<dbReference type="SMART" id="SM00109">
    <property type="entry name" value="C1"/>
    <property type="match status" value="2"/>
</dbReference>
<dbReference type="SMART" id="SM00239">
    <property type="entry name" value="C2"/>
    <property type="match status" value="1"/>
</dbReference>
<dbReference type="SMART" id="SM00133">
    <property type="entry name" value="S_TK_X"/>
    <property type="match status" value="1"/>
</dbReference>
<dbReference type="SMART" id="SM00220">
    <property type="entry name" value="S_TKc"/>
    <property type="match status" value="1"/>
</dbReference>
<dbReference type="SUPFAM" id="SSF49562">
    <property type="entry name" value="C2 domain (Calcium/lipid-binding domain, CaLB)"/>
    <property type="match status" value="1"/>
</dbReference>
<dbReference type="SUPFAM" id="SSF57889">
    <property type="entry name" value="Cysteine-rich domain"/>
    <property type="match status" value="2"/>
</dbReference>
<dbReference type="SUPFAM" id="SSF56112">
    <property type="entry name" value="Protein kinase-like (PK-like)"/>
    <property type="match status" value="1"/>
</dbReference>
<dbReference type="PROSITE" id="PS51285">
    <property type="entry name" value="AGC_KINASE_CTER"/>
    <property type="match status" value="1"/>
</dbReference>
<dbReference type="PROSITE" id="PS50004">
    <property type="entry name" value="C2"/>
    <property type="match status" value="1"/>
</dbReference>
<dbReference type="PROSITE" id="PS00107">
    <property type="entry name" value="PROTEIN_KINASE_ATP"/>
    <property type="match status" value="1"/>
</dbReference>
<dbReference type="PROSITE" id="PS50011">
    <property type="entry name" value="PROTEIN_KINASE_DOM"/>
    <property type="match status" value="1"/>
</dbReference>
<dbReference type="PROSITE" id="PS00108">
    <property type="entry name" value="PROTEIN_KINASE_ST"/>
    <property type="match status" value="1"/>
</dbReference>
<dbReference type="PROSITE" id="PS00479">
    <property type="entry name" value="ZF_DAG_PE_1"/>
    <property type="match status" value="2"/>
</dbReference>
<dbReference type="PROSITE" id="PS50081">
    <property type="entry name" value="ZF_DAG_PE_2"/>
    <property type="match status" value="2"/>
</dbReference>
<keyword id="KW-0002">3D-structure</keyword>
<keyword id="KW-0025">Alternative splicing</keyword>
<keyword id="KW-0067">ATP-binding</keyword>
<keyword id="KW-0090">Biological rhythms</keyword>
<keyword id="KW-0106">Calcium</keyword>
<keyword id="KW-1003">Cell membrane</keyword>
<keyword id="KW-0966">Cell projection</keyword>
<keyword id="KW-0963">Cytoplasm</keyword>
<keyword id="KW-0225">Disease variant</keyword>
<keyword id="KW-0418">Kinase</keyword>
<keyword id="KW-0472">Membrane</keyword>
<keyword id="KW-0479">Metal-binding</keyword>
<keyword id="KW-0523">Neurodegeneration</keyword>
<keyword id="KW-0547">Nucleotide-binding</keyword>
<keyword id="KW-0597">Phosphoprotein</keyword>
<keyword id="KW-1267">Proteomics identification</keyword>
<keyword id="KW-1185">Reference proteome</keyword>
<keyword id="KW-0677">Repeat</keyword>
<keyword id="KW-0723">Serine/threonine-protein kinase</keyword>
<keyword id="KW-0950">Spinocerebellar ataxia</keyword>
<keyword id="KW-0770">Synapse</keyword>
<keyword id="KW-0771">Synaptosome</keyword>
<keyword id="KW-0808">Transferase</keyword>
<keyword id="KW-0832">Ubl conjugation</keyword>
<keyword id="KW-0862">Zinc</keyword>
<keyword id="KW-0863">Zinc-finger</keyword>
<protein>
    <recommendedName>
        <fullName>Protein kinase C gamma type</fullName>
        <shortName>PKC-gamma</shortName>
        <ecNumber evidence="15">2.7.11.13</ecNumber>
    </recommendedName>
</protein>
<sequence length="697" mass="78448">MAGLGPGVGDSEGGPRPLFCRKGALRQKVVHEVKSHKFTARFFKQPTFCSHCTDFIWGIGKQGLQCQVCSFVVHRRCHEFVTFECPGAGKGPQTDDPRNKHKFRLHSYSSPTFCDHCGSLLYGLVHQGMKCSCCEMNVHRRCVRSVPSLCGVDHTERRGRLQLEIRAPTADEIHVTVGEARNLIPMDPNGLSDPYVKLKLIPDPRNLTKQKTRTVKATLNPVWNETFVFNLKPGDVERRLSVEVWDWDRTSRNDFMGAMSFGVSELLKAPVDGWYKLLNQEEGEYYNVPVADADNCSLLQKFEACNYPLELYERVRMGPSSSPIPSPSPSPTDPKRCFFGASPGRLHISDFSFLMVLGKGSFGKVMLAERRGSDELYAIKILKKDVIVQDDDVDCTLVEKRVLALGGRGPGGRPHFLTQLHSTFQTPDRLYFVMEYVTGGDLMYHIQQLGKFKEPHAAFYAAEIAIGLFFLHNQGIIYRDLKLDNVMLDAEGHIKITDFGMCKENVFPGTTTRTFCGTPDYIAPEIIAYQPYGKSVDWWSFGVLLYEMLAGQPPFDGEDEEELFQAIMEQTVTYPKSLSREAVAICKGFLTKHPGKRLGSGPDGEPTIRAHGFFRWIDWERLERLEIPPPFRPRPCGRSGENFDKFFTRAAPALTPPDRLVLASIDQADFQGFTYVNPDFVHPDARSPTSPVPVPVM</sequence>
<reference key="1">
    <citation type="submission" date="2001-02" db="EMBL/GenBank/DDBJ databases">
        <authorList>
            <person name="Cui W.C."/>
            <person name="Yu L."/>
            <person name="Chu Y.Y."/>
            <person name="Wang J."/>
            <person name="Zheng L.H."/>
            <person name="Zhou G.J."/>
            <person name="Zhao S.Y."/>
        </authorList>
    </citation>
    <scope>NUCLEOTIDE SEQUENCE [MRNA] (ISOFORM 1)</scope>
</reference>
<reference key="2">
    <citation type="journal article" date="2004" name="Nat. Genet.">
        <title>Complete sequencing and characterization of 21,243 full-length human cDNAs.</title>
        <authorList>
            <person name="Ota T."/>
            <person name="Suzuki Y."/>
            <person name="Nishikawa T."/>
            <person name="Otsuki T."/>
            <person name="Sugiyama T."/>
            <person name="Irie R."/>
            <person name="Wakamatsu A."/>
            <person name="Hayashi K."/>
            <person name="Sato H."/>
            <person name="Nagai K."/>
            <person name="Kimura K."/>
            <person name="Makita H."/>
            <person name="Sekine M."/>
            <person name="Obayashi M."/>
            <person name="Nishi T."/>
            <person name="Shibahara T."/>
            <person name="Tanaka T."/>
            <person name="Ishii S."/>
            <person name="Yamamoto J."/>
            <person name="Saito K."/>
            <person name="Kawai Y."/>
            <person name="Isono Y."/>
            <person name="Nakamura Y."/>
            <person name="Nagahari K."/>
            <person name="Murakami K."/>
            <person name="Yasuda T."/>
            <person name="Iwayanagi T."/>
            <person name="Wagatsuma M."/>
            <person name="Shiratori A."/>
            <person name="Sudo H."/>
            <person name="Hosoiri T."/>
            <person name="Kaku Y."/>
            <person name="Kodaira H."/>
            <person name="Kondo H."/>
            <person name="Sugawara M."/>
            <person name="Takahashi M."/>
            <person name="Kanda K."/>
            <person name="Yokoi T."/>
            <person name="Furuya T."/>
            <person name="Kikkawa E."/>
            <person name="Omura Y."/>
            <person name="Abe K."/>
            <person name="Kamihara K."/>
            <person name="Katsuta N."/>
            <person name="Sato K."/>
            <person name="Tanikawa M."/>
            <person name="Yamazaki M."/>
            <person name="Ninomiya K."/>
            <person name="Ishibashi T."/>
            <person name="Yamashita H."/>
            <person name="Murakawa K."/>
            <person name="Fujimori K."/>
            <person name="Tanai H."/>
            <person name="Kimata M."/>
            <person name="Watanabe M."/>
            <person name="Hiraoka S."/>
            <person name="Chiba Y."/>
            <person name="Ishida S."/>
            <person name="Ono Y."/>
            <person name="Takiguchi S."/>
            <person name="Watanabe S."/>
            <person name="Yosida M."/>
            <person name="Hotuta T."/>
            <person name="Kusano J."/>
            <person name="Kanehori K."/>
            <person name="Takahashi-Fujii A."/>
            <person name="Hara H."/>
            <person name="Tanase T.-O."/>
            <person name="Nomura Y."/>
            <person name="Togiya S."/>
            <person name="Komai F."/>
            <person name="Hara R."/>
            <person name="Takeuchi K."/>
            <person name="Arita M."/>
            <person name="Imose N."/>
            <person name="Musashino K."/>
            <person name="Yuuki H."/>
            <person name="Oshima A."/>
            <person name="Sasaki N."/>
            <person name="Aotsuka S."/>
            <person name="Yoshikawa Y."/>
            <person name="Matsunawa H."/>
            <person name="Ichihara T."/>
            <person name="Shiohata N."/>
            <person name="Sano S."/>
            <person name="Moriya S."/>
            <person name="Momiyama H."/>
            <person name="Satoh N."/>
            <person name="Takami S."/>
            <person name="Terashima Y."/>
            <person name="Suzuki O."/>
            <person name="Nakagawa S."/>
            <person name="Senoh A."/>
            <person name="Mizoguchi H."/>
            <person name="Goto Y."/>
            <person name="Shimizu F."/>
            <person name="Wakebe H."/>
            <person name="Hishigaki H."/>
            <person name="Watanabe T."/>
            <person name="Sugiyama A."/>
            <person name="Takemoto M."/>
            <person name="Kawakami B."/>
            <person name="Yamazaki M."/>
            <person name="Watanabe K."/>
            <person name="Kumagai A."/>
            <person name="Itakura S."/>
            <person name="Fukuzumi Y."/>
            <person name="Fujimori Y."/>
            <person name="Komiyama M."/>
            <person name="Tashiro H."/>
            <person name="Tanigami A."/>
            <person name="Fujiwara T."/>
            <person name="Ono T."/>
            <person name="Yamada K."/>
            <person name="Fujii Y."/>
            <person name="Ozaki K."/>
            <person name="Hirao M."/>
            <person name="Ohmori Y."/>
            <person name="Kawabata A."/>
            <person name="Hikiji T."/>
            <person name="Kobatake N."/>
            <person name="Inagaki H."/>
            <person name="Ikema Y."/>
            <person name="Okamoto S."/>
            <person name="Okitani R."/>
            <person name="Kawakami T."/>
            <person name="Noguchi S."/>
            <person name="Itoh T."/>
            <person name="Shigeta K."/>
            <person name="Senba T."/>
            <person name="Matsumura K."/>
            <person name="Nakajima Y."/>
            <person name="Mizuno T."/>
            <person name="Morinaga M."/>
            <person name="Sasaki M."/>
            <person name="Togashi T."/>
            <person name="Oyama M."/>
            <person name="Hata H."/>
            <person name="Watanabe M."/>
            <person name="Komatsu T."/>
            <person name="Mizushima-Sugano J."/>
            <person name="Satoh T."/>
            <person name="Shirai Y."/>
            <person name="Takahashi Y."/>
            <person name="Nakagawa K."/>
            <person name="Okumura K."/>
            <person name="Nagase T."/>
            <person name="Nomura N."/>
            <person name="Kikuchi H."/>
            <person name="Masuho Y."/>
            <person name="Yamashita R."/>
            <person name="Nakai K."/>
            <person name="Yada T."/>
            <person name="Nakamura Y."/>
            <person name="Ohara O."/>
            <person name="Isogai T."/>
            <person name="Sugano S."/>
        </authorList>
    </citation>
    <scope>NUCLEOTIDE SEQUENCE [LARGE SCALE MRNA] (ISOFORM 2)</scope>
    <source>
        <tissue>Kidney</tissue>
    </source>
</reference>
<reference key="3">
    <citation type="journal article" date="2004" name="Nature">
        <title>The DNA sequence and biology of human chromosome 19.</title>
        <authorList>
            <person name="Grimwood J."/>
            <person name="Gordon L.A."/>
            <person name="Olsen A.S."/>
            <person name="Terry A."/>
            <person name="Schmutz J."/>
            <person name="Lamerdin J.E."/>
            <person name="Hellsten U."/>
            <person name="Goodstein D."/>
            <person name="Couronne O."/>
            <person name="Tran-Gyamfi M."/>
            <person name="Aerts A."/>
            <person name="Altherr M."/>
            <person name="Ashworth L."/>
            <person name="Bajorek E."/>
            <person name="Black S."/>
            <person name="Branscomb E."/>
            <person name="Caenepeel S."/>
            <person name="Carrano A.V."/>
            <person name="Caoile C."/>
            <person name="Chan Y.M."/>
            <person name="Christensen M."/>
            <person name="Cleland C.A."/>
            <person name="Copeland A."/>
            <person name="Dalin E."/>
            <person name="Dehal P."/>
            <person name="Denys M."/>
            <person name="Detter J.C."/>
            <person name="Escobar J."/>
            <person name="Flowers D."/>
            <person name="Fotopulos D."/>
            <person name="Garcia C."/>
            <person name="Georgescu A.M."/>
            <person name="Glavina T."/>
            <person name="Gomez M."/>
            <person name="Gonzales E."/>
            <person name="Groza M."/>
            <person name="Hammon N."/>
            <person name="Hawkins T."/>
            <person name="Haydu L."/>
            <person name="Ho I."/>
            <person name="Huang W."/>
            <person name="Israni S."/>
            <person name="Jett J."/>
            <person name="Kadner K."/>
            <person name="Kimball H."/>
            <person name="Kobayashi A."/>
            <person name="Larionov V."/>
            <person name="Leem S.-H."/>
            <person name="Lopez F."/>
            <person name="Lou Y."/>
            <person name="Lowry S."/>
            <person name="Malfatti S."/>
            <person name="Martinez D."/>
            <person name="McCready P.M."/>
            <person name="Medina C."/>
            <person name="Morgan J."/>
            <person name="Nelson K."/>
            <person name="Nolan M."/>
            <person name="Ovcharenko I."/>
            <person name="Pitluck S."/>
            <person name="Pollard M."/>
            <person name="Popkie A.P."/>
            <person name="Predki P."/>
            <person name="Quan G."/>
            <person name="Ramirez L."/>
            <person name="Rash S."/>
            <person name="Retterer J."/>
            <person name="Rodriguez A."/>
            <person name="Rogers S."/>
            <person name="Salamov A."/>
            <person name="Salazar A."/>
            <person name="She X."/>
            <person name="Smith D."/>
            <person name="Slezak T."/>
            <person name="Solovyev V."/>
            <person name="Thayer N."/>
            <person name="Tice H."/>
            <person name="Tsai M."/>
            <person name="Ustaszewska A."/>
            <person name="Vo N."/>
            <person name="Wagner M."/>
            <person name="Wheeler J."/>
            <person name="Wu K."/>
            <person name="Xie G."/>
            <person name="Yang J."/>
            <person name="Dubchak I."/>
            <person name="Furey T.S."/>
            <person name="DeJong P."/>
            <person name="Dickson M."/>
            <person name="Gordon D."/>
            <person name="Eichler E.E."/>
            <person name="Pennacchio L.A."/>
            <person name="Richardson P."/>
            <person name="Stubbs L."/>
            <person name="Rokhsar D.S."/>
            <person name="Myers R.M."/>
            <person name="Rubin E.M."/>
            <person name="Lucas S.M."/>
        </authorList>
    </citation>
    <scope>NUCLEOTIDE SEQUENCE [LARGE SCALE GENOMIC DNA]</scope>
</reference>
<reference key="4">
    <citation type="journal article" date="2004" name="Genome Res.">
        <title>The status, quality, and expansion of the NIH full-length cDNA project: the Mammalian Gene Collection (MGC).</title>
        <authorList>
            <consortium name="The MGC Project Team"/>
        </authorList>
    </citation>
    <scope>NUCLEOTIDE SEQUENCE [LARGE SCALE MRNA] (ISOFORM 1)</scope>
    <source>
        <tissue>Brain</tissue>
    </source>
</reference>
<reference key="5">
    <citation type="journal article" date="1986" name="Science">
        <title>Multiple, distinct forms of bovine and human protein kinase C suggest diversity in cellular signaling pathways.</title>
        <authorList>
            <person name="Coussens L."/>
            <person name="Parker P.J."/>
            <person name="Rhee L."/>
            <person name="Yang-Feng T.L."/>
            <person name="Chen E."/>
            <person name="Waterfield M.D."/>
            <person name="Francke U."/>
            <person name="Ullrich A."/>
        </authorList>
    </citation>
    <scope>NUCLEOTIDE SEQUENCE [MRNA] OF 1-317 (ISOFORM 1)</scope>
    <source>
        <tissue>Brain</tissue>
    </source>
</reference>
<reference key="6">
    <citation type="journal article" date="1993" name="Eur. J. Biochem.">
        <title>Activation and substrate specificity of the human protein kinase C alpha and zeta isoenzymes.</title>
        <authorList>
            <person name="Kochs G."/>
            <person name="Hummel R."/>
            <person name="Meyer D."/>
            <person name="Hug H."/>
            <person name="Marme D."/>
            <person name="Sarre T.F."/>
        </authorList>
    </citation>
    <scope>NUCLEOTIDE SEQUENCE [MRNA] OF 162-697 (ISOFORM 1)</scope>
    <source>
        <tissue>Hippocampus</tissue>
    </source>
</reference>
<reference key="7">
    <citation type="journal article" date="2005" name="Cell">
        <title>The C2 domain of PKCdelta is a phosphotyrosine binding domain.</title>
        <authorList>
            <person name="Benes C.H."/>
            <person name="Wu N."/>
            <person name="Elia A.E.H."/>
            <person name="Dharia T."/>
            <person name="Cantley L.C."/>
            <person name="Soltoff S.P."/>
        </authorList>
    </citation>
    <scope>INTERACTION WITH CDCP1</scope>
</reference>
<reference key="8">
    <citation type="journal article" date="2006" name="J. Biol. Chem.">
        <title>Protein kinase C delta regulates Ser46 phosphorylation of p53 tumor suppressor in the apoptotic response to DNA damage.</title>
        <authorList>
            <person name="Yoshida K."/>
            <person name="Liu H."/>
            <person name="Miki Y."/>
        </authorList>
    </citation>
    <scope>FUNCTION</scope>
    <scope>INTERACTION WITH TP53INP1 AND P53/TP53</scope>
</reference>
<reference key="9">
    <citation type="journal article" date="2002" name="J. Biochem.">
        <title>Protein kinase C gamma (PKC gamma): function of neuron specific isotype.</title>
        <authorList>
            <person name="Saito N."/>
            <person name="Shirai Y."/>
        </authorList>
    </citation>
    <scope>REVIEW ON FUNCTION</scope>
</reference>
<reference key="10">
    <citation type="journal article" date="2007" name="Cell. Signal.">
        <title>Protein kinase C as a stress sensor.</title>
        <authorList>
            <person name="Barnett M.E."/>
            <person name="Madgwick D.K."/>
            <person name="Takemoto D.J."/>
        </authorList>
    </citation>
    <scope>REVIEW ON FUNCTION</scope>
</reference>
<reference key="11">
    <citation type="journal article" date="2008" name="Proc. Natl. Acad. Sci. U.S.A.">
        <title>A quantitative atlas of mitotic phosphorylation.</title>
        <authorList>
            <person name="Dephoure N."/>
            <person name="Zhou C."/>
            <person name="Villen J."/>
            <person name="Beausoleil S.A."/>
            <person name="Bakalarski C.E."/>
            <person name="Elledge S.J."/>
            <person name="Gygi S.P."/>
        </authorList>
    </citation>
    <scope>IDENTIFICATION BY MASS SPECTROMETRY [LARGE SCALE ANALYSIS]</scope>
    <source>
        <tissue>Cervix carcinoma</tissue>
    </source>
</reference>
<reference key="12">
    <citation type="journal article" date="2010" name="PLoS ONE">
        <title>Development and validation of a method for profiling post-translational modification activities using protein microarrays.</title>
        <authorList>
            <person name="Del Rincon S.V."/>
            <person name="Rogers J."/>
            <person name="Widschwendter M."/>
            <person name="Sun D."/>
            <person name="Sieburg H.B."/>
            <person name="Spruck C."/>
        </authorList>
    </citation>
    <scope>UBIQUITINATION</scope>
</reference>
<reference key="13">
    <citation type="journal article" date="2022" name="Biochem. J.">
        <title>PKC isoforms activate LRRK1 kinase by phosphorylating conserved residues (Ser1064, Ser1074 and Thr1075) within the CORB GTPase domain.</title>
        <authorList>
            <person name="Malik A.U."/>
            <person name="Karapetsas A."/>
            <person name="Nirujogi R.S."/>
            <person name="Chatterjee D."/>
            <person name="Phung T.K."/>
            <person name="Wightman M."/>
            <person name="Gourlay R."/>
            <person name="Morrice N."/>
            <person name="Mathea S."/>
            <person name="Knapp S."/>
            <person name="Alessi D.R."/>
        </authorList>
    </citation>
    <scope>FUNCTION IN PHOSPHORYLATION OF LRRK1</scope>
    <scope>CATALYTIC ACTIVITY</scope>
</reference>
<reference key="14">
    <citation type="submission" date="2007-12" db="PDB data bank">
        <title>Solution structure of the phorbol esters/diacylglycerol binding domain of protein kinase C gamma.</title>
        <authorList>
            <consortium name="RIKEN structural genomics initiative (RSGI)"/>
        </authorList>
    </citation>
    <scope>STRUCTURE BY NMR OF 36-105</scope>
</reference>
<reference key="15">
    <citation type="submission" date="2007-04" db="PDB data bank">
        <title>Crystal structure of C2 domain of protein kinase C gamma.</title>
        <authorList>
            <person name="Pike A.C.W."/>
            <person name="Amos A."/>
            <person name="Johansson C."/>
            <person name="Sobott F."/>
            <person name="Savitsky P."/>
            <person name="Berridge G."/>
            <person name="Fedorov O."/>
            <person name="Umeano C."/>
            <person name="Gorrec F."/>
            <person name="Bunkoczi G."/>
            <person name="Debreczeni J."/>
            <person name="Von Delft F."/>
            <person name="Arrowsmith C.H."/>
            <person name="Edwards A."/>
            <person name="Weigelt J."/>
            <person name="Sundstrom M."/>
            <person name="Knapp S."/>
        </authorList>
    </citation>
    <scope>X-RAY CRYSTALLOGRAPHY (2.00 ANGSTROMS) OF 154-295 IN COMPLEX WITH CALCIUM IONS</scope>
    <scope>COFACTOR</scope>
</reference>
<reference key="16">
    <citation type="journal article" date="1998" name="Am. J. Hum. Genet.">
        <title>Segregation of a PRKCG mutation in two RP11 families.</title>
        <authorList>
            <person name="Al-Maghtheh M."/>
            <person name="Vithana E.N."/>
            <person name="Inglehearn C.F."/>
            <person name="Moore T."/>
            <person name="Bird A.C."/>
            <person name="Bhattacharya S.S."/>
        </authorList>
    </citation>
    <scope>VARIANTS CYS-141; GLN-415; ASP-523 AND SER-659</scope>
</reference>
<reference key="17">
    <citation type="journal article" date="1999" name="Am. J. Hum. Genet.">
        <title>No mutations in the coding region of the PRKCG gene in three families with retinitis pigmentosa linked to the RP11 locus on chromosome 19q.</title>
        <authorList>
            <person name="Dryja T.P."/>
            <person name="McEvoy J."/>
            <person name="McGee T.L."/>
            <person name="Berson E.L."/>
        </authorList>
    </citation>
    <scope>SHOWS THAT THE VARIANTS ARE NOT A CAUSE OF RP11</scope>
</reference>
<reference key="18">
    <citation type="journal article" date="2003" name="Am. J. Hum. Genet.">
        <title>Missense mutations in the regulatory domain of PKC gamma: a new mechanism for dominant nonepisodic cerebellar ataxia.</title>
        <authorList>
            <person name="Chen D.-H."/>
            <person name="Brkanac Z."/>
            <person name="Verlinde C.L.M.J."/>
            <person name="Tan X.-J."/>
            <person name="Bylenok L."/>
            <person name="Nochlin D."/>
            <person name="Matsushita M."/>
            <person name="Lipe H."/>
            <person name="Wolff J."/>
            <person name="Fernandez M."/>
            <person name="Cimino P.J."/>
            <person name="Bird T.D."/>
            <person name="Raskind W.H."/>
        </authorList>
    </citation>
    <scope>TISSUE SPECIFICITY</scope>
    <scope>VARIANTS SCA14 TYR-101; PRO-119 AND ASP-128</scope>
</reference>
<reference key="19">
    <citation type="journal article" date="2017" name="Brain">
        <title>Exome sequencing and network analysis identifies shared mechanisms underlying spinocerebellar ataxia.</title>
        <authorList>
            <person name="Nibbeling E.A.R."/>
            <person name="Duarri A."/>
            <person name="Verschuuren-Bemelmans C.C."/>
            <person name="Fokkens M.R."/>
            <person name="Karjalainen J.M."/>
            <person name="Smeets C.J.L.M."/>
            <person name="de Boer-Bergsma J.J."/>
            <person name="van der Vries G."/>
            <person name="Dooijes D."/>
            <person name="Bampi G.B."/>
            <person name="van Diemen C."/>
            <person name="Brunt E."/>
            <person name="Ippel E."/>
            <person name="Kremer B."/>
            <person name="Vlak M."/>
            <person name="Adir N."/>
            <person name="Wijmenga C."/>
            <person name="van de Warrenburg B.P.C."/>
            <person name="Franke L."/>
            <person name="Sinke R.J."/>
            <person name="Verbeek D.S."/>
        </authorList>
    </citation>
    <scope>VARIANTS SCA14 VAL-63 AND ARG-63</scope>
    <scope>SUBCELLULAR LOCATION</scope>
</reference>
<comment type="function">
    <text evidence="2 3 12 15">Calcium-activated, phospholipid- and diacylglycerol (DAG)-dependent serine/threonine-protein kinase that plays diverse roles in neuronal cells and eye tissues, such as regulation of the neuronal receptors GRIA4/GLUR4 and GRIN1/NMDAR1, modulation of receptors and neuronal functions related to sensitivity to opiates, pain and alcohol, mediation of synaptic function and cell survival after ischemia, and inhibition of gap junction activity after oxidative stress. Binds and phosphorylates GRIA4/GLUR4 glutamate receptor and regulates its function by increasing plasma membrane-associated GRIA4 expression. In primary cerebellar neurons treated with the agonist 3,5-dihyidroxyphenylglycine, functions downstream of the metabotropic glutamate receptor GRM5/MGLUR5 and phosphorylates GRIN1/NMDAR1 receptor which plays a key role in synaptic plasticity, synaptogenesis, excitotoxicity, memory acquisition and learning. May be involved in the regulation of hippocampal long-term potentiation (LTP), but may be not necessary for the process of synaptic plasticity. May be involved in desensitization of mu-type opioid receptor-mediated G-protein activation in the spinal cord, and may be critical for the development and/or maintenance of morphine-induced reinforcing effects in the limbic forebrain. May modulate the functionality of mu-type-opioid receptors by participating in a signaling pathway which leads to the phosphorylation and degradation of opioid receptors. May also contributes to chronic morphine-induced changes in nociceptive processing. Plays a role in neuropathic pain mechanisms and contributes to the maintenance of the allodynia pain produced by peripheral inflammation. Plays an important role in initial sensitivity and tolerance to ethanol, by mediating the behavioral effects of ethanol as well as the effects of this drug on the GABA(A) receptors. During and after cerebral ischemia modulate neurotransmission and cell survival in synaptic membranes, and is involved in insulin-induced inhibition of necrosis, an important mechanism for minimizing ischemic injury. Required for the elimination of multiple climbing fibers during innervation of Purkinje cells in developing cerebellum. Is activated in lens epithelial cells upon hydrogen peroxide treatment, and phosphorylates connexin-43 (GJA1/CX43), resulting in disassembly of GJA1 gap junction plaques and inhibition of gap junction activity which could provide a protective effect against oxidative stress (By similarity). Phosphorylates p53/TP53 and promotes p53/TP53-dependent apoptosis in response to DNA damage. Involved in the phase resetting of the cerebral cortex circadian clock during temporally restricted feeding. Stabilizes the core clock component BMAL1 by interfering with its ubiquitination, thus suppressing its degradation, resulting in phase resetting of the cerebral cortex clock (By similarity). Phosphorylates and activates LRRK1, which phosphorylates RAB proteins involved in intracellular trafficking (PubMed:36040231).</text>
</comment>
<comment type="catalytic activity">
    <reaction evidence="15">
        <text>L-seryl-[protein] + ATP = O-phospho-L-seryl-[protein] + ADP + H(+)</text>
        <dbReference type="Rhea" id="RHEA:17989"/>
        <dbReference type="Rhea" id="RHEA-COMP:9863"/>
        <dbReference type="Rhea" id="RHEA-COMP:11604"/>
        <dbReference type="ChEBI" id="CHEBI:15378"/>
        <dbReference type="ChEBI" id="CHEBI:29999"/>
        <dbReference type="ChEBI" id="CHEBI:30616"/>
        <dbReference type="ChEBI" id="CHEBI:83421"/>
        <dbReference type="ChEBI" id="CHEBI:456216"/>
        <dbReference type="EC" id="2.7.11.13"/>
    </reaction>
</comment>
<comment type="catalytic activity">
    <reaction evidence="15">
        <text>L-threonyl-[protein] + ATP = O-phospho-L-threonyl-[protein] + ADP + H(+)</text>
        <dbReference type="Rhea" id="RHEA:46608"/>
        <dbReference type="Rhea" id="RHEA-COMP:11060"/>
        <dbReference type="Rhea" id="RHEA-COMP:11605"/>
        <dbReference type="ChEBI" id="CHEBI:15378"/>
        <dbReference type="ChEBI" id="CHEBI:30013"/>
        <dbReference type="ChEBI" id="CHEBI:30616"/>
        <dbReference type="ChEBI" id="CHEBI:61977"/>
        <dbReference type="ChEBI" id="CHEBI:456216"/>
        <dbReference type="EC" id="2.7.11.13"/>
    </reaction>
</comment>
<comment type="cofactor">
    <cofactor evidence="5 17">
        <name>Ca(2+)</name>
        <dbReference type="ChEBI" id="CHEBI:29108"/>
    </cofactor>
    <text evidence="17">Binds 3 Ca(2+) ions per subunit. The ions are bound to the C2 domain.</text>
</comment>
<comment type="activity regulation">
    <text>Classical (or conventional) PKCs (PRKCA, PRKCB and PRKCG) are activated by calcium and diacylglycerol (DAG) in the presence of phosphatidylserine. Three specific sites; Thr-514 (activation loop of the kinase domain), Thr-655 (turn motif) and Thr-674 (hydrophobic region), need to be phosphorylated for its full activation.</text>
</comment>
<comment type="subunit">
    <text evidence="2 11 12">Interacts with GRIA4 (By similarity). Interacts with CDCP1. Interacts with TP53INP1 and p53/TP53. Interacts with BMAL1 (By similarity).</text>
</comment>
<comment type="interaction">
    <interactant intactId="EBI-949799">
        <id>P05129</id>
    </interactant>
    <interactant intactId="EBI-10290462">
        <id>Q96KS9</id>
        <label>FAM167A</label>
    </interactant>
    <organismsDiffer>false</organismsDiffer>
    <experiments>3</experiments>
</comment>
<comment type="interaction">
    <interactant intactId="EBI-949799">
        <id>P05129</id>
    </interactant>
    <interactant intactId="EBI-352572">
        <id>P08238</id>
        <label>HSP90AB1</label>
    </interactant>
    <organismsDiffer>false</organismsDiffer>
    <experiments>2</experiments>
</comment>
<comment type="interaction">
    <interactant intactId="EBI-949799">
        <id>P05129</id>
    </interactant>
    <interactant intactId="EBI-742756">
        <id>P08727</id>
        <label>KRT19</label>
    </interactant>
    <organismsDiffer>false</organismsDiffer>
    <experiments>3</experiments>
</comment>
<comment type="interaction">
    <interactant intactId="EBI-949799">
        <id>P05129</id>
    </interactant>
    <interactant intactId="EBI-629434">
        <id>O75925</id>
        <label>PIAS1</label>
    </interactant>
    <organismsDiffer>false</organismsDiffer>
    <experiments>3</experiments>
</comment>
<comment type="interaction">
    <interactant intactId="EBI-949799">
        <id>P05129</id>
    </interactant>
    <interactant intactId="EBI-11528848">
        <id>Q8N6K7-2</id>
        <label>SAMD3</label>
    </interactant>
    <organismsDiffer>false</organismsDiffer>
    <experiments>3</experiments>
</comment>
<comment type="interaction">
    <interactant intactId="EBI-949799">
        <id>P05129</id>
    </interactant>
    <interactant intactId="EBI-3923210">
        <id>Q8TDR4</id>
        <label>TCP10L</label>
    </interactant>
    <organismsDiffer>false</organismsDiffer>
    <experiments>3</experiments>
</comment>
<comment type="interaction">
    <interactant intactId="EBI-949799">
        <id>P05129</id>
    </interactant>
    <interactant intactId="EBI-356498">
        <id>P62258</id>
        <label>YWHAE</label>
    </interactant>
    <organismsDiffer>false</organismsDiffer>
    <experiments>2</experiments>
</comment>
<comment type="subcellular location">
    <subcellularLocation>
        <location evidence="2">Cytoplasm</location>
    </subcellularLocation>
    <subcellularLocation>
        <location evidence="1">Cytoplasm</location>
        <location evidence="1">Perinuclear region</location>
    </subcellularLocation>
    <subcellularLocation>
        <location evidence="14">Cell membrane</location>
        <topology evidence="1">Peripheral membrane protein</topology>
    </subcellularLocation>
    <subcellularLocation>
        <location evidence="2">Synapse</location>
        <location evidence="2">Synaptosome</location>
    </subcellularLocation>
    <subcellularLocation>
        <location evidence="3">Cell projection</location>
        <location evidence="3">Dendrite</location>
    </subcellularLocation>
    <text evidence="2">Translocates to synaptic membranes on stimulation.</text>
</comment>
<comment type="alternative products">
    <event type="alternative splicing"/>
    <isoform>
        <id>P05129-1</id>
        <name>1</name>
        <sequence type="displayed"/>
    </isoform>
    <isoform>
        <id>P05129-2</id>
        <name>2</name>
        <sequence type="described" ref="VSP_056467 VSP_056468 VSP_056469"/>
    </isoform>
</comment>
<comment type="tissue specificity">
    <text evidence="10">Expressed in Purkinje cells of the cerebellar cortex.</text>
</comment>
<comment type="PTM">
    <text evidence="2">Autophosphorylation on Thr-674 appears to regulate motor functions of junctophilins, JPH3 and JPH4.</text>
</comment>
<comment type="PTM">
    <text evidence="13">Ubiquitinated.</text>
</comment>
<comment type="disease" evidence="10 14">
    <disease id="DI-01077">
        <name>Spinocerebellar ataxia 14</name>
        <acronym>SCA14</acronym>
        <description>Spinocerebellar ataxia is a clinically and genetically heterogeneous group of cerebellar disorders. Patients show progressive incoordination of gait and often poor coordination of hands, speech and eye movements, due to degeneration of the cerebellum with variable involvement of the brainstem and spinal cord. SCA14 is an autosomal dominant cerebellar ataxia (ADCA).</description>
        <dbReference type="MIM" id="605361"/>
    </disease>
    <text>The disease is caused by variants affecting the gene represented in this entry.</text>
</comment>
<comment type="similarity">
    <text evidence="19">Belongs to the protein kinase superfamily. AGC Ser/Thr protein kinase family. PKC subfamily.</text>
</comment>
<name>KPCG_HUMAN</name>
<proteinExistence type="evidence at protein level"/>
<organism>
    <name type="scientific">Homo sapiens</name>
    <name type="common">Human</name>
    <dbReference type="NCBI Taxonomy" id="9606"/>
    <lineage>
        <taxon>Eukaryota</taxon>
        <taxon>Metazoa</taxon>
        <taxon>Chordata</taxon>
        <taxon>Craniata</taxon>
        <taxon>Vertebrata</taxon>
        <taxon>Euteleostomi</taxon>
        <taxon>Mammalia</taxon>
        <taxon>Eutheria</taxon>
        <taxon>Euarchontoglires</taxon>
        <taxon>Primates</taxon>
        <taxon>Haplorrhini</taxon>
        <taxon>Catarrhini</taxon>
        <taxon>Hominidae</taxon>
        <taxon>Homo</taxon>
    </lineage>
</organism>
<gene>
    <name type="primary">PRKCG</name>
    <name type="synonym">PKCG</name>
</gene>
<accession>P05129</accession>
<accession>B7Z8Q0</accession>